<protein>
    <recommendedName>
        <fullName evidence="1">Small ribosomal subunit protein uS4</fullName>
    </recommendedName>
    <alternativeName>
        <fullName evidence="2">30S ribosomal protein S4</fullName>
    </alternativeName>
</protein>
<accession>A1WV98</accession>
<proteinExistence type="inferred from homology"/>
<dbReference type="EMBL" id="CP000544">
    <property type="protein sequence ID" value="ABM61610.1"/>
    <property type="molecule type" value="Genomic_DNA"/>
</dbReference>
<dbReference type="RefSeq" id="WP_011813633.1">
    <property type="nucleotide sequence ID" value="NC_008789.1"/>
</dbReference>
<dbReference type="SMR" id="A1WV98"/>
<dbReference type="STRING" id="349124.Hhal_0834"/>
<dbReference type="KEGG" id="hha:Hhal_0834"/>
<dbReference type="eggNOG" id="COG0522">
    <property type="taxonomic scope" value="Bacteria"/>
</dbReference>
<dbReference type="HOGENOM" id="CLU_092403_0_2_6"/>
<dbReference type="OrthoDB" id="9803672at2"/>
<dbReference type="Proteomes" id="UP000000647">
    <property type="component" value="Chromosome"/>
</dbReference>
<dbReference type="GO" id="GO:0015935">
    <property type="term" value="C:small ribosomal subunit"/>
    <property type="evidence" value="ECO:0007669"/>
    <property type="project" value="InterPro"/>
</dbReference>
<dbReference type="GO" id="GO:0019843">
    <property type="term" value="F:rRNA binding"/>
    <property type="evidence" value="ECO:0007669"/>
    <property type="project" value="UniProtKB-UniRule"/>
</dbReference>
<dbReference type="GO" id="GO:0003735">
    <property type="term" value="F:structural constituent of ribosome"/>
    <property type="evidence" value="ECO:0007669"/>
    <property type="project" value="InterPro"/>
</dbReference>
<dbReference type="GO" id="GO:0042274">
    <property type="term" value="P:ribosomal small subunit biogenesis"/>
    <property type="evidence" value="ECO:0007669"/>
    <property type="project" value="TreeGrafter"/>
</dbReference>
<dbReference type="GO" id="GO:0006412">
    <property type="term" value="P:translation"/>
    <property type="evidence" value="ECO:0007669"/>
    <property type="project" value="UniProtKB-UniRule"/>
</dbReference>
<dbReference type="CDD" id="cd00165">
    <property type="entry name" value="S4"/>
    <property type="match status" value="1"/>
</dbReference>
<dbReference type="FunFam" id="1.10.1050.10:FF:000001">
    <property type="entry name" value="30S ribosomal protein S4"/>
    <property type="match status" value="1"/>
</dbReference>
<dbReference type="FunFam" id="3.10.290.10:FF:000001">
    <property type="entry name" value="30S ribosomal protein S4"/>
    <property type="match status" value="1"/>
</dbReference>
<dbReference type="Gene3D" id="1.10.1050.10">
    <property type="entry name" value="Ribosomal Protein S4 Delta 41, Chain A, domain 1"/>
    <property type="match status" value="1"/>
</dbReference>
<dbReference type="Gene3D" id="3.10.290.10">
    <property type="entry name" value="RNA-binding S4 domain"/>
    <property type="match status" value="1"/>
</dbReference>
<dbReference type="HAMAP" id="MF_01306_B">
    <property type="entry name" value="Ribosomal_uS4_B"/>
    <property type="match status" value="1"/>
</dbReference>
<dbReference type="InterPro" id="IPR022801">
    <property type="entry name" value="Ribosomal_uS4"/>
</dbReference>
<dbReference type="InterPro" id="IPR005709">
    <property type="entry name" value="Ribosomal_uS4_bac-type"/>
</dbReference>
<dbReference type="InterPro" id="IPR018079">
    <property type="entry name" value="Ribosomal_uS4_CS"/>
</dbReference>
<dbReference type="InterPro" id="IPR001912">
    <property type="entry name" value="Ribosomal_uS4_N"/>
</dbReference>
<dbReference type="InterPro" id="IPR002942">
    <property type="entry name" value="S4_RNA-bd"/>
</dbReference>
<dbReference type="InterPro" id="IPR036986">
    <property type="entry name" value="S4_RNA-bd_sf"/>
</dbReference>
<dbReference type="NCBIfam" id="NF003717">
    <property type="entry name" value="PRK05327.1"/>
    <property type="match status" value="1"/>
</dbReference>
<dbReference type="NCBIfam" id="TIGR01017">
    <property type="entry name" value="rpsD_bact"/>
    <property type="match status" value="1"/>
</dbReference>
<dbReference type="PANTHER" id="PTHR11831">
    <property type="entry name" value="30S 40S RIBOSOMAL PROTEIN"/>
    <property type="match status" value="1"/>
</dbReference>
<dbReference type="PANTHER" id="PTHR11831:SF4">
    <property type="entry name" value="SMALL RIBOSOMAL SUBUNIT PROTEIN US4M"/>
    <property type="match status" value="1"/>
</dbReference>
<dbReference type="Pfam" id="PF00163">
    <property type="entry name" value="Ribosomal_S4"/>
    <property type="match status" value="1"/>
</dbReference>
<dbReference type="Pfam" id="PF01479">
    <property type="entry name" value="S4"/>
    <property type="match status" value="1"/>
</dbReference>
<dbReference type="SMART" id="SM01390">
    <property type="entry name" value="Ribosomal_S4"/>
    <property type="match status" value="1"/>
</dbReference>
<dbReference type="SMART" id="SM00363">
    <property type="entry name" value="S4"/>
    <property type="match status" value="1"/>
</dbReference>
<dbReference type="SUPFAM" id="SSF55174">
    <property type="entry name" value="Alpha-L RNA-binding motif"/>
    <property type="match status" value="1"/>
</dbReference>
<dbReference type="PROSITE" id="PS00632">
    <property type="entry name" value="RIBOSOMAL_S4"/>
    <property type="match status" value="1"/>
</dbReference>
<dbReference type="PROSITE" id="PS50889">
    <property type="entry name" value="S4"/>
    <property type="match status" value="1"/>
</dbReference>
<comment type="function">
    <text evidence="1">One of the primary rRNA binding proteins, it binds directly to 16S rRNA where it nucleates assembly of the body of the 30S subunit.</text>
</comment>
<comment type="function">
    <text evidence="1">With S5 and S12 plays an important role in translational accuracy.</text>
</comment>
<comment type="subunit">
    <text evidence="1">Part of the 30S ribosomal subunit. Contacts protein S5. The interaction surface between S4 and S5 is involved in control of translational fidelity.</text>
</comment>
<comment type="similarity">
    <text evidence="1">Belongs to the universal ribosomal protein uS4 family.</text>
</comment>
<reference key="1">
    <citation type="submission" date="2006-12" db="EMBL/GenBank/DDBJ databases">
        <title>Complete sequence of Halorhodospira halophila SL1.</title>
        <authorList>
            <consortium name="US DOE Joint Genome Institute"/>
            <person name="Copeland A."/>
            <person name="Lucas S."/>
            <person name="Lapidus A."/>
            <person name="Barry K."/>
            <person name="Detter J.C."/>
            <person name="Glavina del Rio T."/>
            <person name="Hammon N."/>
            <person name="Israni S."/>
            <person name="Dalin E."/>
            <person name="Tice H."/>
            <person name="Pitluck S."/>
            <person name="Saunders E."/>
            <person name="Brettin T."/>
            <person name="Bruce D."/>
            <person name="Han C."/>
            <person name="Tapia R."/>
            <person name="Schmutz J."/>
            <person name="Larimer F."/>
            <person name="Land M."/>
            <person name="Hauser L."/>
            <person name="Kyrpides N."/>
            <person name="Mikhailova N."/>
            <person name="Hoff W."/>
            <person name="Richardson P."/>
        </authorList>
    </citation>
    <scope>NUCLEOTIDE SEQUENCE [LARGE SCALE GENOMIC DNA]</scope>
    <source>
        <strain>DSM 244 / SL1</strain>
    </source>
</reference>
<feature type="chain" id="PRO_0000293290" description="Small ribosomal subunit protein uS4">
    <location>
        <begin position="1"/>
        <end position="207"/>
    </location>
</feature>
<feature type="domain" description="S4 RNA-binding" evidence="1">
    <location>
        <begin position="97"/>
        <end position="159"/>
    </location>
</feature>
<name>RS4_HALHL</name>
<keyword id="KW-1185">Reference proteome</keyword>
<keyword id="KW-0687">Ribonucleoprotein</keyword>
<keyword id="KW-0689">Ribosomal protein</keyword>
<keyword id="KW-0694">RNA-binding</keyword>
<keyword id="KW-0699">rRNA-binding</keyword>
<evidence type="ECO:0000255" key="1">
    <source>
        <dbReference type="HAMAP-Rule" id="MF_01306"/>
    </source>
</evidence>
<evidence type="ECO:0000305" key="2"/>
<organism>
    <name type="scientific">Halorhodospira halophila (strain DSM 244 / SL1)</name>
    <name type="common">Ectothiorhodospira halophila (strain DSM 244 / SL1)</name>
    <dbReference type="NCBI Taxonomy" id="349124"/>
    <lineage>
        <taxon>Bacteria</taxon>
        <taxon>Pseudomonadati</taxon>
        <taxon>Pseudomonadota</taxon>
        <taxon>Gammaproteobacteria</taxon>
        <taxon>Chromatiales</taxon>
        <taxon>Ectothiorhodospiraceae</taxon>
        <taxon>Halorhodospira</taxon>
    </lineage>
</organism>
<gene>
    <name evidence="1" type="primary">rpsD</name>
    <name type="ordered locus">Hhal_0834</name>
</gene>
<sequence>MAKYIGPKCKLARREKTDLFLKSGVRSIDTKCKLEQPPGQHGQRRGGRMSDYGLQLREKQKVRRMYGIMERQFRNYYKEAARRKAATGTALLQLLESRLDNVCYRMGFGSTRAEARQLVNHRGVLVNGRVVNIPSYQVQPGDTVSVKEKAKSQLRIQAALELAQQNGWASWVDVDATKMEGVFKQAPDRADLSQEINESLIVELYSK</sequence>